<keyword id="KW-0903">Direct protein sequencing</keyword>
<keyword id="KW-0325">Glycoprotein</keyword>
<keyword id="KW-0326">Glycosidase</keyword>
<keyword id="KW-0378">Hydrolase</keyword>
<keyword id="KW-0443">Lipid metabolism</keyword>
<keyword id="KW-0458">Lysosome</keyword>
<keyword id="KW-1185">Reference proteome</keyword>
<keyword id="KW-0732">Signal</keyword>
<accession>P17164</accession>
<accession>Q642C6</accession>
<feature type="signal peptide" evidence="4">
    <location>
        <begin position="1"/>
        <end position="28"/>
    </location>
</feature>
<feature type="chain" id="PRO_0000010311" description="Tissue alpha-L-fucosidase">
    <location>
        <begin position="29"/>
        <end position="462"/>
    </location>
</feature>
<feature type="site" description="May be important for catalysis">
    <location>
        <position position="292"/>
    </location>
</feature>
<feature type="glycosylation site" description="N-linked (GlcNAc...) asparagine" evidence="2">
    <location>
        <position position="237"/>
    </location>
</feature>
<feature type="glycosylation site" description="N-linked (GlcNAc...) asparagine" evidence="2">
    <location>
        <position position="264"/>
    </location>
</feature>
<feature type="glycosylation site" description="N-linked (GlcNAc...) asparagine" evidence="2">
    <location>
        <position position="378"/>
    </location>
</feature>
<feature type="sequence conflict" description="In Ref. 2; AAH81844." evidence="5" ref="2">
    <original>D</original>
    <variation>E</variation>
    <location>
        <position position="3"/>
    </location>
</feature>
<feature type="sequence conflict" description="In Ref. 2; AAH81844." evidence="5" ref="2">
    <original>R</original>
    <variation>K</variation>
    <location>
        <position position="377"/>
    </location>
</feature>
<comment type="function">
    <text>Alpha-L-fucosidase is responsible for hydrolyzing the alpha-1,6-linked fucose joined to the reducing-end N-acetylglucosamine of the carbohydrate moieties of glycoproteins.</text>
</comment>
<comment type="catalytic activity">
    <reaction evidence="3">
        <text>an alpha-L-fucoside + H2O = L-fucose + an alcohol</text>
        <dbReference type="Rhea" id="RHEA:12288"/>
        <dbReference type="ChEBI" id="CHEBI:2181"/>
        <dbReference type="ChEBI" id="CHEBI:15377"/>
        <dbReference type="ChEBI" id="CHEBI:28349"/>
        <dbReference type="ChEBI" id="CHEBI:30879"/>
        <dbReference type="EC" id="3.2.1.51"/>
    </reaction>
</comment>
<comment type="catalytic activity">
    <reaction evidence="1">
        <text>a neolactoside IV(2)-alpha-Fuc-nLc4Cer(d18:1(4E)) + H2O = a neolactoside nLc4Cer(d18:1(4E)) + L-fucose</text>
        <dbReference type="Rhea" id="RHEA:48224"/>
        <dbReference type="ChEBI" id="CHEBI:2181"/>
        <dbReference type="ChEBI" id="CHEBI:15377"/>
        <dbReference type="ChEBI" id="CHEBI:17006"/>
        <dbReference type="ChEBI" id="CHEBI:28691"/>
    </reaction>
    <physiologicalReaction direction="left-to-right" evidence="1">
        <dbReference type="Rhea" id="RHEA:48225"/>
    </physiologicalReaction>
</comment>
<comment type="catalytic activity">
    <reaction evidence="1">
        <text>a neolactoside IV(2)-alpha-Fuc-nLc4Cer(d18:0) + H2O = a neolactoside nLc4Cer(d18:0) + L-fucose</text>
        <dbReference type="Rhea" id="RHEA:49308"/>
        <dbReference type="ChEBI" id="CHEBI:2181"/>
        <dbReference type="ChEBI" id="CHEBI:15377"/>
        <dbReference type="ChEBI" id="CHEBI:91119"/>
        <dbReference type="ChEBI" id="CHEBI:91121"/>
    </reaction>
    <physiologicalReaction direction="left-to-right" evidence="1">
        <dbReference type="Rhea" id="RHEA:49309"/>
    </physiologicalReaction>
</comment>
<comment type="subunit">
    <text>Homotetramer.</text>
</comment>
<comment type="subcellular location">
    <subcellularLocation>
        <location evidence="1">Lysosome</location>
    </subcellularLocation>
</comment>
<comment type="similarity">
    <text evidence="5">Belongs to the glycosyl hydrolase 29 family.</text>
</comment>
<protein>
    <recommendedName>
        <fullName>Tissue alpha-L-fucosidase</fullName>
        <ecNumber>3.2.1.51</ecNumber>
    </recommendedName>
    <alternativeName>
        <fullName>Alpha-L-fucosidase I</fullName>
    </alternativeName>
    <alternativeName>
        <fullName>Alpha-L-fucoside fucohydrolase 1</fullName>
        <shortName>Alpha-L-fucosidase 1</shortName>
    </alternativeName>
</protein>
<evidence type="ECO:0000250" key="1">
    <source>
        <dbReference type="UniProtKB" id="P04066"/>
    </source>
</evidence>
<evidence type="ECO:0000255" key="2"/>
<evidence type="ECO:0000255" key="3">
    <source>
        <dbReference type="PROSITE-ProRule" id="PRU10054"/>
    </source>
</evidence>
<evidence type="ECO:0000269" key="4">
    <source>
    </source>
</evidence>
<evidence type="ECO:0000305" key="5"/>
<proteinExistence type="evidence at protein level"/>
<organism>
    <name type="scientific">Rattus norvegicus</name>
    <name type="common">Rat</name>
    <dbReference type="NCBI Taxonomy" id="10116"/>
    <lineage>
        <taxon>Eukaryota</taxon>
        <taxon>Metazoa</taxon>
        <taxon>Chordata</taxon>
        <taxon>Craniata</taxon>
        <taxon>Vertebrata</taxon>
        <taxon>Euteleostomi</taxon>
        <taxon>Mammalia</taxon>
        <taxon>Eutheria</taxon>
        <taxon>Euarchontoglires</taxon>
        <taxon>Glires</taxon>
        <taxon>Rodentia</taxon>
        <taxon>Myomorpha</taxon>
        <taxon>Muroidea</taxon>
        <taxon>Muridae</taxon>
        <taxon>Murinae</taxon>
        <taxon>Rattus</taxon>
    </lineage>
</organism>
<gene>
    <name type="primary">Fuca1</name>
    <name type="synonym">Fuca</name>
</gene>
<name>FUCO_RAT</name>
<reference key="1">
    <citation type="journal article" date="1989" name="Biochem. J.">
        <title>Isolation and sequence analysis of a cDNA encoding rat liver alpha-L-fucosidase.</title>
        <authorList>
            <person name="Fisher K.J."/>
            <person name="Aronson N.N. Jr."/>
        </authorList>
    </citation>
    <scope>NUCLEOTIDE SEQUENCE [MRNA]</scope>
    <scope>PROTEIN SEQUENCE OF 29-40; 90-124 AND 307-372</scope>
    <source>
        <tissue>Liver</tissue>
    </source>
</reference>
<reference key="2">
    <citation type="journal article" date="2004" name="Genome Res.">
        <title>The status, quality, and expansion of the NIH full-length cDNA project: the Mammalian Gene Collection (MGC).</title>
        <authorList>
            <consortium name="The MGC Project Team"/>
        </authorList>
    </citation>
    <scope>NUCLEOTIDE SEQUENCE [LARGE SCALE MRNA]</scope>
    <source>
        <tissue>Heart</tissue>
    </source>
</reference>
<sequence>MWDLKSEWWAVGFGLLLLLAASAQAGGLAPHHYTPDWPSLDSRPLPRWFDEAKFGLFVHWGVYSVPAWGSEWFWWHWQGEQSSAYVRFMKENYPPGFSYADFAPQFTARFFHPEEWADLFQAAGAKYVVLTAKHHEGFTNWPSAVSWNWNSKDVGPHRDLVGELGAAVRKRNIRYGLYHSLFEWFHPLYLLDKKNGLKTQHFVSTKTMPELYDLVNRYKPDLIWSDGEWECPDSYWNSTEFLAWLYNESPVKDQVVVNDRWGQNCSCRHGGYYNCEDKYRPHSLPDHKWEMCTSVDKASWGYRRDMSMSTIVDENEIIEELVQTISLGGNYLLNIGPNKDGVIVPIFQERLLAVGKWLQINGEAIYASKPWRVQSERNKTVVWYTTKDSAVYATFLHWPEDGVVNLQSPKMTSATKITMLGMEGELHWTQDPLEGVLITLPQLPPGTFPVESAWTLKLTKVN</sequence>
<dbReference type="EC" id="3.2.1.51"/>
<dbReference type="EMBL" id="X16145">
    <property type="protein sequence ID" value="CAA34268.1"/>
    <property type="molecule type" value="mRNA"/>
</dbReference>
<dbReference type="EMBL" id="BC081844">
    <property type="protein sequence ID" value="AAH81844.1"/>
    <property type="molecule type" value="mRNA"/>
</dbReference>
<dbReference type="PIR" id="S07074">
    <property type="entry name" value="S10235"/>
</dbReference>
<dbReference type="RefSeq" id="NP_036694.2">
    <property type="nucleotide sequence ID" value="NM_012562.2"/>
</dbReference>
<dbReference type="SMR" id="P17164"/>
<dbReference type="FunCoup" id="P17164">
    <property type="interactions" value="292"/>
</dbReference>
<dbReference type="IntAct" id="P17164">
    <property type="interactions" value="1"/>
</dbReference>
<dbReference type="STRING" id="10116.ENSRNOP00000012455"/>
<dbReference type="BindingDB" id="P17164"/>
<dbReference type="ChEMBL" id="CHEMBL2710"/>
<dbReference type="CAZy" id="GH29">
    <property type="family name" value="Glycoside Hydrolase Family 29"/>
</dbReference>
<dbReference type="GlyCosmos" id="P17164">
    <property type="glycosylation" value="3 sites, No reported glycans"/>
</dbReference>
<dbReference type="GlyGen" id="P17164">
    <property type="glycosylation" value="3 sites"/>
</dbReference>
<dbReference type="PhosphoSitePlus" id="P17164"/>
<dbReference type="jPOST" id="P17164"/>
<dbReference type="PaxDb" id="10116-ENSRNOP00000012455"/>
<dbReference type="GeneID" id="24375"/>
<dbReference type="KEGG" id="rno:24375"/>
<dbReference type="UCSC" id="RGD:2636">
    <property type="organism name" value="rat"/>
</dbReference>
<dbReference type="AGR" id="RGD:2636"/>
<dbReference type="CTD" id="2517"/>
<dbReference type="RGD" id="2636">
    <property type="gene designation" value="Fuca1"/>
</dbReference>
<dbReference type="eggNOG" id="KOG3340">
    <property type="taxonomic scope" value="Eukaryota"/>
</dbReference>
<dbReference type="InParanoid" id="P17164"/>
<dbReference type="OrthoDB" id="6039950at2759"/>
<dbReference type="PhylomeDB" id="P17164"/>
<dbReference type="TreeFam" id="TF313034"/>
<dbReference type="BRENDA" id="3.2.1.51">
    <property type="organism ID" value="5301"/>
</dbReference>
<dbReference type="Reactome" id="R-RNO-6798695">
    <property type="pathway name" value="Neutrophil degranulation"/>
</dbReference>
<dbReference type="Reactome" id="R-RNO-975578">
    <property type="pathway name" value="Reactions specific to the complex N-glycan synthesis pathway"/>
</dbReference>
<dbReference type="SABIO-RK" id="P17164"/>
<dbReference type="PRO" id="PR:P17164"/>
<dbReference type="Proteomes" id="UP000002494">
    <property type="component" value="Unplaced"/>
</dbReference>
<dbReference type="GO" id="GO:0005764">
    <property type="term" value="C:lysosome"/>
    <property type="evidence" value="ECO:0000318"/>
    <property type="project" value="GO_Central"/>
</dbReference>
<dbReference type="GO" id="GO:0004560">
    <property type="term" value="F:alpha-L-fucosidase activity"/>
    <property type="evidence" value="ECO:0000266"/>
    <property type="project" value="RGD"/>
</dbReference>
<dbReference type="GO" id="GO:0030246">
    <property type="term" value="F:carbohydrate binding"/>
    <property type="evidence" value="ECO:0000314"/>
    <property type="project" value="RGD"/>
</dbReference>
<dbReference type="GO" id="GO:0015928">
    <property type="term" value="F:fucosidase activity"/>
    <property type="evidence" value="ECO:0000314"/>
    <property type="project" value="RGD"/>
</dbReference>
<dbReference type="GO" id="GO:0006004">
    <property type="term" value="P:fucose metabolic process"/>
    <property type="evidence" value="ECO:0000266"/>
    <property type="project" value="RGD"/>
</dbReference>
<dbReference type="GO" id="GO:0016139">
    <property type="term" value="P:glycoside catabolic process"/>
    <property type="evidence" value="ECO:0000266"/>
    <property type="project" value="RGD"/>
</dbReference>
<dbReference type="GO" id="GO:0006629">
    <property type="term" value="P:lipid metabolic process"/>
    <property type="evidence" value="ECO:0007669"/>
    <property type="project" value="UniProtKB-KW"/>
</dbReference>
<dbReference type="FunFam" id="2.60.40.1180:FF:000013">
    <property type="entry name" value="Alpha-L-fucosidase"/>
    <property type="match status" value="1"/>
</dbReference>
<dbReference type="FunFam" id="3.20.20.80:FF:000027">
    <property type="entry name" value="Alpha-L-fucosidase"/>
    <property type="match status" value="1"/>
</dbReference>
<dbReference type="Gene3D" id="3.20.20.80">
    <property type="entry name" value="Glycosidases"/>
    <property type="match status" value="1"/>
</dbReference>
<dbReference type="Gene3D" id="2.60.40.1180">
    <property type="entry name" value="Golgi alpha-mannosidase II"/>
    <property type="match status" value="1"/>
</dbReference>
<dbReference type="InterPro" id="IPR016286">
    <property type="entry name" value="FUC_metazoa-typ"/>
</dbReference>
<dbReference type="InterPro" id="IPR031919">
    <property type="entry name" value="Fucosidase_C"/>
</dbReference>
<dbReference type="InterPro" id="IPR000933">
    <property type="entry name" value="Glyco_hydro_29"/>
</dbReference>
<dbReference type="InterPro" id="IPR018526">
    <property type="entry name" value="Glyco_hydro_29_CS"/>
</dbReference>
<dbReference type="InterPro" id="IPR013780">
    <property type="entry name" value="Glyco_hydro_b"/>
</dbReference>
<dbReference type="InterPro" id="IPR017853">
    <property type="entry name" value="Glycoside_hydrolase_SF"/>
</dbReference>
<dbReference type="PANTHER" id="PTHR10030">
    <property type="entry name" value="ALPHA-L-FUCOSIDASE"/>
    <property type="match status" value="1"/>
</dbReference>
<dbReference type="PANTHER" id="PTHR10030:SF2">
    <property type="entry name" value="TISSUE ALPHA-L-FUCOSIDASE"/>
    <property type="match status" value="1"/>
</dbReference>
<dbReference type="Pfam" id="PF01120">
    <property type="entry name" value="Alpha_L_fucos"/>
    <property type="match status" value="1"/>
</dbReference>
<dbReference type="Pfam" id="PF16757">
    <property type="entry name" value="Fucosidase_C"/>
    <property type="match status" value="1"/>
</dbReference>
<dbReference type="PIRSF" id="PIRSF001092">
    <property type="entry name" value="Alpha-L-fucosidase"/>
    <property type="match status" value="1"/>
</dbReference>
<dbReference type="PRINTS" id="PR00741">
    <property type="entry name" value="GLHYDRLASE29"/>
</dbReference>
<dbReference type="SMART" id="SM00812">
    <property type="entry name" value="Alpha_L_fucos"/>
    <property type="match status" value="1"/>
</dbReference>
<dbReference type="SUPFAM" id="SSF51445">
    <property type="entry name" value="(Trans)glycosidases"/>
    <property type="match status" value="1"/>
</dbReference>
<dbReference type="PROSITE" id="PS00385">
    <property type="entry name" value="ALPHA_L_FUCOSIDASE"/>
    <property type="match status" value="1"/>
</dbReference>